<keyword id="KW-0488">Methylation</keyword>
<keyword id="KW-1185">Reference proteome</keyword>
<keyword id="KW-0687">Ribonucleoprotein</keyword>
<keyword id="KW-0689">Ribosomal protein</keyword>
<keyword id="KW-0694">RNA-binding</keyword>
<keyword id="KW-0699">rRNA-binding</keyword>
<feature type="chain" id="PRO_1000083393" description="Large ribosomal subunit protein uL11">
    <location>
        <begin position="1"/>
        <end position="142"/>
    </location>
</feature>
<reference key="1">
    <citation type="journal article" date="2008" name="Genome Res.">
        <title>The genome of Pelotomaculum thermopropionicum reveals niche-associated evolution in anaerobic microbiota.</title>
        <authorList>
            <person name="Kosaka T."/>
            <person name="Kato S."/>
            <person name="Shimoyama T."/>
            <person name="Ishii S."/>
            <person name="Abe T."/>
            <person name="Watanabe K."/>
        </authorList>
    </citation>
    <scope>NUCLEOTIDE SEQUENCE [LARGE SCALE GENOMIC DNA]</scope>
    <source>
        <strain>DSM 13744 / JCM 10971 / SI</strain>
    </source>
</reference>
<evidence type="ECO:0000255" key="1">
    <source>
        <dbReference type="HAMAP-Rule" id="MF_00736"/>
    </source>
</evidence>
<evidence type="ECO:0000305" key="2"/>
<organism>
    <name type="scientific">Pelotomaculum thermopropionicum (strain DSM 13744 / JCM 10971 / SI)</name>
    <dbReference type="NCBI Taxonomy" id="370438"/>
    <lineage>
        <taxon>Bacteria</taxon>
        <taxon>Bacillati</taxon>
        <taxon>Bacillota</taxon>
        <taxon>Clostridia</taxon>
        <taxon>Eubacteriales</taxon>
        <taxon>Desulfotomaculaceae</taxon>
        <taxon>Pelotomaculum</taxon>
    </lineage>
</organism>
<dbReference type="EMBL" id="AP009389">
    <property type="protein sequence ID" value="BAF58487.1"/>
    <property type="molecule type" value="Genomic_DNA"/>
</dbReference>
<dbReference type="SMR" id="A5D5K4"/>
<dbReference type="STRING" id="370438.PTH_0306"/>
<dbReference type="KEGG" id="pth:PTH_0306"/>
<dbReference type="eggNOG" id="COG0080">
    <property type="taxonomic scope" value="Bacteria"/>
</dbReference>
<dbReference type="HOGENOM" id="CLU_074237_2_1_9"/>
<dbReference type="Proteomes" id="UP000006556">
    <property type="component" value="Chromosome"/>
</dbReference>
<dbReference type="GO" id="GO:0022625">
    <property type="term" value="C:cytosolic large ribosomal subunit"/>
    <property type="evidence" value="ECO:0007669"/>
    <property type="project" value="TreeGrafter"/>
</dbReference>
<dbReference type="GO" id="GO:0070180">
    <property type="term" value="F:large ribosomal subunit rRNA binding"/>
    <property type="evidence" value="ECO:0007669"/>
    <property type="project" value="UniProtKB-UniRule"/>
</dbReference>
<dbReference type="GO" id="GO:0003735">
    <property type="term" value="F:structural constituent of ribosome"/>
    <property type="evidence" value="ECO:0007669"/>
    <property type="project" value="InterPro"/>
</dbReference>
<dbReference type="GO" id="GO:0006412">
    <property type="term" value="P:translation"/>
    <property type="evidence" value="ECO:0007669"/>
    <property type="project" value="UniProtKB-UniRule"/>
</dbReference>
<dbReference type="CDD" id="cd00349">
    <property type="entry name" value="Ribosomal_L11"/>
    <property type="match status" value="1"/>
</dbReference>
<dbReference type="FunFam" id="1.10.10.250:FF:000001">
    <property type="entry name" value="50S ribosomal protein L11"/>
    <property type="match status" value="1"/>
</dbReference>
<dbReference type="FunFam" id="3.30.1550.10:FF:000001">
    <property type="entry name" value="50S ribosomal protein L11"/>
    <property type="match status" value="1"/>
</dbReference>
<dbReference type="Gene3D" id="1.10.10.250">
    <property type="entry name" value="Ribosomal protein L11, C-terminal domain"/>
    <property type="match status" value="1"/>
</dbReference>
<dbReference type="Gene3D" id="3.30.1550.10">
    <property type="entry name" value="Ribosomal protein L11/L12, N-terminal domain"/>
    <property type="match status" value="1"/>
</dbReference>
<dbReference type="HAMAP" id="MF_00736">
    <property type="entry name" value="Ribosomal_uL11"/>
    <property type="match status" value="1"/>
</dbReference>
<dbReference type="InterPro" id="IPR000911">
    <property type="entry name" value="Ribosomal_uL11"/>
</dbReference>
<dbReference type="InterPro" id="IPR006519">
    <property type="entry name" value="Ribosomal_uL11_bac-typ"/>
</dbReference>
<dbReference type="InterPro" id="IPR020783">
    <property type="entry name" value="Ribosomal_uL11_C"/>
</dbReference>
<dbReference type="InterPro" id="IPR036769">
    <property type="entry name" value="Ribosomal_uL11_C_sf"/>
</dbReference>
<dbReference type="InterPro" id="IPR020785">
    <property type="entry name" value="Ribosomal_uL11_CS"/>
</dbReference>
<dbReference type="InterPro" id="IPR020784">
    <property type="entry name" value="Ribosomal_uL11_N"/>
</dbReference>
<dbReference type="InterPro" id="IPR036796">
    <property type="entry name" value="Ribosomal_uL11_N_sf"/>
</dbReference>
<dbReference type="NCBIfam" id="TIGR01632">
    <property type="entry name" value="L11_bact"/>
    <property type="match status" value="1"/>
</dbReference>
<dbReference type="PANTHER" id="PTHR11661">
    <property type="entry name" value="60S RIBOSOMAL PROTEIN L12"/>
    <property type="match status" value="1"/>
</dbReference>
<dbReference type="PANTHER" id="PTHR11661:SF1">
    <property type="entry name" value="LARGE RIBOSOMAL SUBUNIT PROTEIN UL11M"/>
    <property type="match status" value="1"/>
</dbReference>
<dbReference type="Pfam" id="PF00298">
    <property type="entry name" value="Ribosomal_L11"/>
    <property type="match status" value="1"/>
</dbReference>
<dbReference type="Pfam" id="PF03946">
    <property type="entry name" value="Ribosomal_L11_N"/>
    <property type="match status" value="1"/>
</dbReference>
<dbReference type="SMART" id="SM00649">
    <property type="entry name" value="RL11"/>
    <property type="match status" value="1"/>
</dbReference>
<dbReference type="SUPFAM" id="SSF54747">
    <property type="entry name" value="Ribosomal L11/L12e N-terminal domain"/>
    <property type="match status" value="1"/>
</dbReference>
<dbReference type="SUPFAM" id="SSF46906">
    <property type="entry name" value="Ribosomal protein L11, C-terminal domain"/>
    <property type="match status" value="1"/>
</dbReference>
<dbReference type="PROSITE" id="PS00359">
    <property type="entry name" value="RIBOSOMAL_L11"/>
    <property type="match status" value="1"/>
</dbReference>
<gene>
    <name evidence="1" type="primary">rplK</name>
    <name type="ordered locus">PTH_0306</name>
</gene>
<proteinExistence type="inferred from homology"/>
<protein>
    <recommendedName>
        <fullName evidence="1">Large ribosomal subunit protein uL11</fullName>
    </recommendedName>
    <alternativeName>
        <fullName evidence="2">50S ribosomal protein L11</fullName>
    </alternativeName>
</protein>
<comment type="function">
    <text evidence="1">Forms part of the ribosomal stalk which helps the ribosome interact with GTP-bound translation factors.</text>
</comment>
<comment type="subunit">
    <text evidence="1">Part of the ribosomal stalk of the 50S ribosomal subunit. Interacts with L10 and the large rRNA to form the base of the stalk. L10 forms an elongated spine to which L12 dimers bind in a sequential fashion forming a multimeric L10(L12)X complex.</text>
</comment>
<comment type="PTM">
    <text evidence="1">One or more lysine residues are methylated.</text>
</comment>
<comment type="similarity">
    <text evidence="1">Belongs to the universal ribosomal protein uL11 family.</text>
</comment>
<accession>A5D5K4</accession>
<sequence>MAKRVAAIVKLQVPAGKATPAPPVGPALGQHGVNIMAFVKEYNERTAAQAGLIIPVEITVYEDRSFTFVTKTPPAAVLLKKAAGLETASGEPNKKKVAKLPRSKVKEIAELKMPDLNAASIEAAMRMIEGTARSMGIDIVEG</sequence>
<name>RL11_PELTS</name>